<name>Y2832_COREF</name>
<feature type="chain" id="PRO_0000245617" description="UPF0371 protein CE2832">
    <location>
        <begin position="1"/>
        <end position="495"/>
    </location>
</feature>
<dbReference type="EMBL" id="BA000035">
    <property type="protein sequence ID" value="BAC19642.1"/>
    <property type="molecule type" value="Genomic_DNA"/>
</dbReference>
<dbReference type="RefSeq" id="WP_006768813.1">
    <property type="nucleotide sequence ID" value="NC_004369.1"/>
</dbReference>
<dbReference type="SMR" id="Q8FLN6"/>
<dbReference type="STRING" id="196164.gene:10743282"/>
<dbReference type="KEGG" id="cef:CE2832"/>
<dbReference type="eggNOG" id="COG4868">
    <property type="taxonomic scope" value="Bacteria"/>
</dbReference>
<dbReference type="HOGENOM" id="CLU_046981_0_0_11"/>
<dbReference type="OrthoDB" id="9803572at2"/>
<dbReference type="Proteomes" id="UP000001409">
    <property type="component" value="Chromosome"/>
</dbReference>
<dbReference type="Gene3D" id="1.20.1570.10">
    <property type="entry name" value="dip2346 domain like"/>
    <property type="match status" value="1"/>
</dbReference>
<dbReference type="Gene3D" id="3.10.630.10">
    <property type="entry name" value="dip2346 domain like"/>
    <property type="match status" value="1"/>
</dbReference>
<dbReference type="Gene3D" id="3.40.140.40">
    <property type="entry name" value="Domain of unknown function (DUF1846), C-terminal subdomain"/>
    <property type="match status" value="1"/>
</dbReference>
<dbReference type="HAMAP" id="MF_01567">
    <property type="entry name" value="UPF0371"/>
    <property type="match status" value="1"/>
</dbReference>
<dbReference type="InterPro" id="IPR014999">
    <property type="entry name" value="DUF1846"/>
</dbReference>
<dbReference type="InterPro" id="IPR048441">
    <property type="entry name" value="DUF1846_C"/>
</dbReference>
<dbReference type="InterPro" id="IPR048496">
    <property type="entry name" value="DUF1846_N"/>
</dbReference>
<dbReference type="NCBIfam" id="NF010184">
    <property type="entry name" value="PRK13663.1"/>
    <property type="match status" value="1"/>
</dbReference>
<dbReference type="Pfam" id="PF08903">
    <property type="entry name" value="DUF1846"/>
    <property type="match status" value="1"/>
</dbReference>
<dbReference type="Pfam" id="PF20921">
    <property type="entry name" value="DUF1846_C"/>
    <property type="match status" value="1"/>
</dbReference>
<dbReference type="PIRSF" id="PIRSF033132">
    <property type="entry name" value="DUF1846"/>
    <property type="match status" value="1"/>
</dbReference>
<proteinExistence type="inferred from homology"/>
<comment type="similarity">
    <text evidence="1">Belongs to the UPF0371 family.</text>
</comment>
<sequence length="495" mass="55110">MRTGFDRDLYVRMQSQHINERREQIGGKLYLEMGGKLFDDLHASRVLPGFTPDNKIAMLEQLKDELEILVTINAKDLQRNKTRADLDISYEDDVLRLIDVFREAGFLTEHVVLTQLEDDNYQAMQFIQRLERLGIKVARHRVIPGYPTDARRIVSEEGFGRNEYVETTRNLVVVTAPGPGSGKLATCLSQIYGDHQRGISSGYAKFETFPIWDLPLEHPVNLAYEAATADLDDINVIDPFHLTAYGEKATSYNRDVEVFPLLKTMLEMLSGSSPYQSPTDMGVNMVGSAIADDEVCREAARQEIVRRYFKALVDERRDELDDTVSSRIAIVMSKAGCSVEDRTVVARALELESETGAPASAILLDDGRIVTGKTSALLGCSAAMLLNALKELAGIDPSIDLLSPESIEPIQTLKTEHLGSRNPRLHTDEVLIALSVSAAASDNARRALDQLKNLRGCDVHTTTILGSVDEGIFRNLGVLVTSEPKYQRKALYRKR</sequence>
<accession>Q8FLN6</accession>
<reference key="1">
    <citation type="journal article" date="2003" name="Genome Res.">
        <title>Comparative complete genome sequence analysis of the amino acid replacements responsible for the thermostability of Corynebacterium efficiens.</title>
        <authorList>
            <person name="Nishio Y."/>
            <person name="Nakamura Y."/>
            <person name="Kawarabayasi Y."/>
            <person name="Usuda Y."/>
            <person name="Kimura E."/>
            <person name="Sugimoto S."/>
            <person name="Matsui K."/>
            <person name="Yamagishi A."/>
            <person name="Kikuchi H."/>
            <person name="Ikeo K."/>
            <person name="Gojobori T."/>
        </authorList>
    </citation>
    <scope>NUCLEOTIDE SEQUENCE [LARGE SCALE GENOMIC DNA]</scope>
    <source>
        <strain>DSM 44549 / YS-314 / AJ 12310 / JCM 11189 / NBRC 100395</strain>
    </source>
</reference>
<keyword id="KW-1185">Reference proteome</keyword>
<gene>
    <name type="ordered locus">CE2832</name>
</gene>
<evidence type="ECO:0000255" key="1">
    <source>
        <dbReference type="HAMAP-Rule" id="MF_01567"/>
    </source>
</evidence>
<organism>
    <name type="scientific">Corynebacterium efficiens (strain DSM 44549 / YS-314 / AJ 12310 / JCM 11189 / NBRC 100395)</name>
    <dbReference type="NCBI Taxonomy" id="196164"/>
    <lineage>
        <taxon>Bacteria</taxon>
        <taxon>Bacillati</taxon>
        <taxon>Actinomycetota</taxon>
        <taxon>Actinomycetes</taxon>
        <taxon>Mycobacteriales</taxon>
        <taxon>Corynebacteriaceae</taxon>
        <taxon>Corynebacterium</taxon>
    </lineage>
</organism>
<protein>
    <recommendedName>
        <fullName evidence="1">UPF0371 protein CE2832</fullName>
    </recommendedName>
</protein>